<dbReference type="EMBL" id="BC124049">
    <property type="protein sequence ID" value="AAI24050.1"/>
    <property type="molecule type" value="mRNA"/>
</dbReference>
<dbReference type="RefSeq" id="NP_001072877.1">
    <property type="nucleotide sequence ID" value="NM_001079409.1"/>
</dbReference>
<dbReference type="SMR" id="Q08CX1"/>
<dbReference type="FunCoup" id="Q08CX1">
    <property type="interactions" value="772"/>
</dbReference>
<dbReference type="STRING" id="8364.ENSXETP00000046748"/>
<dbReference type="PaxDb" id="8364-ENSXETP00000036560"/>
<dbReference type="GeneID" id="780339"/>
<dbReference type="KEGG" id="xtr:780339"/>
<dbReference type="AGR" id="Xenbase:XB-GENE-1002559"/>
<dbReference type="CTD" id="158158"/>
<dbReference type="Xenbase" id="XB-GENE-1002559">
    <property type="gene designation" value="rasef"/>
</dbReference>
<dbReference type="eggNOG" id="KOG0078">
    <property type="taxonomic scope" value="Eukaryota"/>
</dbReference>
<dbReference type="HOGENOM" id="CLU_023178_1_0_1"/>
<dbReference type="InParanoid" id="Q08CX1"/>
<dbReference type="OMA" id="FIGHSPQ"/>
<dbReference type="OrthoDB" id="9879408at2759"/>
<dbReference type="PhylomeDB" id="Q08CX1"/>
<dbReference type="TreeFam" id="TF313106"/>
<dbReference type="Proteomes" id="UP000008143">
    <property type="component" value="Chromosome 1"/>
</dbReference>
<dbReference type="Bgee" id="ENSXETG00000016758">
    <property type="expression patterns" value="Expressed in brain and 4 other cell types or tissues"/>
</dbReference>
<dbReference type="ExpressionAtlas" id="Q08CX1">
    <property type="expression patterns" value="baseline"/>
</dbReference>
<dbReference type="GO" id="GO:0048471">
    <property type="term" value="C:perinuclear region of cytoplasm"/>
    <property type="evidence" value="ECO:0007669"/>
    <property type="project" value="UniProtKB-SubCell"/>
</dbReference>
<dbReference type="GO" id="GO:0005509">
    <property type="term" value="F:calcium ion binding"/>
    <property type="evidence" value="ECO:0007669"/>
    <property type="project" value="InterPro"/>
</dbReference>
<dbReference type="GO" id="GO:0005525">
    <property type="term" value="F:GTP binding"/>
    <property type="evidence" value="ECO:0007669"/>
    <property type="project" value="UniProtKB-KW"/>
</dbReference>
<dbReference type="GO" id="GO:0003924">
    <property type="term" value="F:GTPase activity"/>
    <property type="evidence" value="ECO:0007669"/>
    <property type="project" value="InterPro"/>
</dbReference>
<dbReference type="CDD" id="cd00051">
    <property type="entry name" value="EFh"/>
    <property type="match status" value="1"/>
</dbReference>
<dbReference type="CDD" id="cd00154">
    <property type="entry name" value="Rab"/>
    <property type="match status" value="1"/>
</dbReference>
<dbReference type="FunFam" id="3.40.50.300:FF:001348">
    <property type="entry name" value="Ras and EF-hand domain-containing protein"/>
    <property type="match status" value="1"/>
</dbReference>
<dbReference type="Gene3D" id="1.10.287.1490">
    <property type="match status" value="1"/>
</dbReference>
<dbReference type="Gene3D" id="1.10.238.10">
    <property type="entry name" value="EF-hand"/>
    <property type="match status" value="1"/>
</dbReference>
<dbReference type="Gene3D" id="3.40.50.300">
    <property type="entry name" value="P-loop containing nucleotide triphosphate hydrolases"/>
    <property type="match status" value="1"/>
</dbReference>
<dbReference type="InterPro" id="IPR011992">
    <property type="entry name" value="EF-hand-dom_pair"/>
</dbReference>
<dbReference type="InterPro" id="IPR002048">
    <property type="entry name" value="EF_hand_dom"/>
</dbReference>
<dbReference type="InterPro" id="IPR027417">
    <property type="entry name" value="P-loop_NTPase"/>
</dbReference>
<dbReference type="InterPro" id="IPR050227">
    <property type="entry name" value="Rab"/>
</dbReference>
<dbReference type="InterPro" id="IPR005225">
    <property type="entry name" value="Small_GTP-bd"/>
</dbReference>
<dbReference type="InterPro" id="IPR001806">
    <property type="entry name" value="Small_GTPase"/>
</dbReference>
<dbReference type="NCBIfam" id="TIGR00231">
    <property type="entry name" value="small_GTP"/>
    <property type="match status" value="1"/>
</dbReference>
<dbReference type="PANTHER" id="PTHR47977">
    <property type="entry name" value="RAS-RELATED PROTEIN RAB"/>
    <property type="match status" value="1"/>
</dbReference>
<dbReference type="Pfam" id="PF13499">
    <property type="entry name" value="EF-hand_7"/>
    <property type="match status" value="1"/>
</dbReference>
<dbReference type="Pfam" id="PF00071">
    <property type="entry name" value="Ras"/>
    <property type="match status" value="1"/>
</dbReference>
<dbReference type="PRINTS" id="PR00449">
    <property type="entry name" value="RASTRNSFRMNG"/>
</dbReference>
<dbReference type="SMART" id="SM00177">
    <property type="entry name" value="ARF"/>
    <property type="match status" value="1"/>
</dbReference>
<dbReference type="SMART" id="SM00175">
    <property type="entry name" value="RAB"/>
    <property type="match status" value="1"/>
</dbReference>
<dbReference type="SMART" id="SM00176">
    <property type="entry name" value="RAN"/>
    <property type="match status" value="1"/>
</dbReference>
<dbReference type="SMART" id="SM00173">
    <property type="entry name" value="RAS"/>
    <property type="match status" value="1"/>
</dbReference>
<dbReference type="SMART" id="SM00174">
    <property type="entry name" value="RHO"/>
    <property type="match status" value="1"/>
</dbReference>
<dbReference type="SUPFAM" id="SSF47473">
    <property type="entry name" value="EF-hand"/>
    <property type="match status" value="1"/>
</dbReference>
<dbReference type="SUPFAM" id="SSF52540">
    <property type="entry name" value="P-loop containing nucleoside triphosphate hydrolases"/>
    <property type="match status" value="1"/>
</dbReference>
<dbReference type="PROSITE" id="PS50222">
    <property type="entry name" value="EF_HAND_2"/>
    <property type="match status" value="2"/>
</dbReference>
<dbReference type="PROSITE" id="PS51419">
    <property type="entry name" value="RAB"/>
    <property type="match status" value="1"/>
</dbReference>
<organism>
    <name type="scientific">Xenopus tropicalis</name>
    <name type="common">Western clawed frog</name>
    <name type="synonym">Silurana tropicalis</name>
    <dbReference type="NCBI Taxonomy" id="8364"/>
    <lineage>
        <taxon>Eukaryota</taxon>
        <taxon>Metazoa</taxon>
        <taxon>Chordata</taxon>
        <taxon>Craniata</taxon>
        <taxon>Vertebrata</taxon>
        <taxon>Euteleostomi</taxon>
        <taxon>Amphibia</taxon>
        <taxon>Batrachia</taxon>
        <taxon>Anura</taxon>
        <taxon>Pipoidea</taxon>
        <taxon>Pipidae</taxon>
        <taxon>Xenopodinae</taxon>
        <taxon>Xenopus</taxon>
        <taxon>Silurana</taxon>
    </lineage>
</organism>
<keyword id="KW-0175">Coiled coil</keyword>
<keyword id="KW-0963">Cytoplasm</keyword>
<keyword id="KW-0342">GTP-binding</keyword>
<keyword id="KW-0547">Nucleotide-binding</keyword>
<keyword id="KW-1185">Reference proteome</keyword>
<keyword id="KW-0677">Repeat</keyword>
<evidence type="ECO:0000250" key="1">
    <source>
        <dbReference type="UniProtKB" id="Q8IZ41"/>
    </source>
</evidence>
<evidence type="ECO:0000255" key="2"/>
<evidence type="ECO:0000255" key="3">
    <source>
        <dbReference type="PROSITE-ProRule" id="PRU00448"/>
    </source>
</evidence>
<evidence type="ECO:0000256" key="4">
    <source>
        <dbReference type="SAM" id="MobiDB-lite"/>
    </source>
</evidence>
<evidence type="ECO:0000305" key="5"/>
<accession>Q08CX1</accession>
<feature type="chain" id="PRO_0000299580" description="Ras and EF-hand domain-containing protein">
    <location>
        <begin position="1"/>
        <end position="722"/>
    </location>
</feature>
<feature type="domain" description="EF-hand 1" evidence="3">
    <location>
        <begin position="5"/>
        <end position="39"/>
    </location>
</feature>
<feature type="domain" description="EF-hand 2" evidence="3">
    <location>
        <begin position="39"/>
        <end position="74"/>
    </location>
</feature>
<feature type="region of interest" description="Disordered" evidence="4">
    <location>
        <begin position="75"/>
        <end position="109"/>
    </location>
</feature>
<feature type="region of interest" description="Disordered" evidence="4">
    <location>
        <begin position="355"/>
        <end position="384"/>
    </location>
</feature>
<feature type="region of interest" description="Disordered" evidence="4">
    <location>
        <begin position="439"/>
        <end position="491"/>
    </location>
</feature>
<feature type="coiled-coil region" evidence="2">
    <location>
        <begin position="156"/>
        <end position="335"/>
    </location>
</feature>
<feature type="compositionally biased region" description="Basic and acidic residues" evidence="4">
    <location>
        <begin position="75"/>
        <end position="84"/>
    </location>
</feature>
<feature type="compositionally biased region" description="Polar residues" evidence="4">
    <location>
        <begin position="355"/>
        <end position="374"/>
    </location>
</feature>
<feature type="compositionally biased region" description="Low complexity" evidence="4">
    <location>
        <begin position="480"/>
        <end position="491"/>
    </location>
</feature>
<feature type="binding site" evidence="1">
    <location>
        <begin position="532"/>
        <end position="537"/>
    </location>
    <ligand>
        <name>GTP</name>
        <dbReference type="ChEBI" id="CHEBI:37565"/>
    </ligand>
</feature>
<feature type="binding site" evidence="1">
    <location>
        <begin position="635"/>
        <end position="638"/>
    </location>
    <ligand>
        <name>GTP</name>
        <dbReference type="ChEBI" id="CHEBI:37565"/>
    </ligand>
</feature>
<feature type="binding site" evidence="1">
    <location>
        <begin position="672"/>
        <end position="673"/>
    </location>
    <ligand>
        <name>GTP</name>
        <dbReference type="ChEBI" id="CHEBI:37565"/>
    </ligand>
</feature>
<name>RASEF_XENTR</name>
<protein>
    <recommendedName>
        <fullName>Ras and EF-hand domain-containing protein</fullName>
    </recommendedName>
</protein>
<comment type="function">
    <text evidence="1">Binds predominantly GDP, and also GTP.</text>
</comment>
<comment type="subunit">
    <text evidence="1">Homodimer.</text>
</comment>
<comment type="subcellular location">
    <subcellularLocation>
        <location evidence="1">Cytoplasm</location>
        <location evidence="1">Perinuclear region</location>
    </subcellularLocation>
</comment>
<comment type="similarity">
    <text evidence="5">Belongs to the small GTPase superfamily. Rab family.</text>
</comment>
<proteinExistence type="evidence at transcript level"/>
<gene>
    <name type="primary">rasef</name>
</gene>
<sequence length="722" mass="81821">MEDKDELSRLRALFHTFDSKSSGRLEKGQFSALCAELKVSPSEAEDIFARLDSDKDSCITFEDFAMGFRGARGLHMPEGKKDVEQGEPPKSPSTPDKEEKPEETSSPAWEDFQRRLADEVNYIPRREQASILYQNINIVEPLLIQQYEHVIRNFVREIRLQSTEMENLAIAVKRAQDKAAIQLSELEEEMDQRIQAVEKRVKKEEKRKSEEALNDLKRQHESEVAELQVTIKKLKKLEEQSKNINLKEDVAVLRRRLHDLTMENQKLRKDLLEAQTSISFLQSELDALKSDYADQSLSSERDMDIIRGFTDERENLARQIEILQTANRKLHDSNDGLRSALENSLMKYNRSLRTINTSPGSTISRNSPKLTRCTSPYDRSPRSSYLDEDYDSLAVCDPMQRMNCEVDSLPESCIDSGLSTLRDSNEYDSEAEYRPPRIFHRSRFPHENYGGDASDTDVPEIRDEESYAPDNGGNLDWKPSNPVSRSSSGASSSRKCISALSANVTSAETVDKVHKYTHAEKAYKIVLAGDAAVGKSSFLMRLCKNEFRGNTSATLGVDFQMKTLVVDGEPTILQLWDTAGQERFRSIAKSYFRRADGVLLLYDVTCEKSFLNVREWIDMIEDATSEAIPIMMVGNKADLRQLMAEQGHICVSTNYGEKLSRTYGALFCETSAKEGSNIVEAVLHLAREVRKRCDNEDDRGSVTNLSAAISKKPAQMKNCCNV</sequence>
<reference key="1">
    <citation type="submission" date="2006-09" db="EMBL/GenBank/DDBJ databases">
        <authorList>
            <consortium name="NIH - Xenopus Gene Collection (XGC) project"/>
        </authorList>
    </citation>
    <scope>NUCLEOTIDE SEQUENCE [LARGE SCALE MRNA]</scope>
    <source>
        <strain>N6</strain>
        <tissue>Oviduct</tissue>
    </source>
</reference>